<comment type="function">
    <text evidence="1">Catalyzes the prenylation of para-hydroxybenzoate (PHB) with an all-trans polyprenyl group. Mediates the second step in the final reaction sequence of ubiquinone-8 (UQ-8) biosynthesis, which is the condensation of the polyisoprenoid side chain with PHB, generating the first membrane-bound Q intermediate 3-octaprenyl-4-hydroxybenzoate.</text>
</comment>
<comment type="catalytic activity">
    <reaction evidence="1">
        <text>all-trans-octaprenyl diphosphate + 4-hydroxybenzoate = 4-hydroxy-3-(all-trans-octaprenyl)benzoate + diphosphate</text>
        <dbReference type="Rhea" id="RHEA:27782"/>
        <dbReference type="ChEBI" id="CHEBI:1617"/>
        <dbReference type="ChEBI" id="CHEBI:17879"/>
        <dbReference type="ChEBI" id="CHEBI:33019"/>
        <dbReference type="ChEBI" id="CHEBI:57711"/>
        <dbReference type="EC" id="2.5.1.39"/>
    </reaction>
</comment>
<comment type="cofactor">
    <cofactor evidence="1">
        <name>Mg(2+)</name>
        <dbReference type="ChEBI" id="CHEBI:18420"/>
    </cofactor>
</comment>
<comment type="pathway">
    <text evidence="1">Cofactor biosynthesis; ubiquinone biosynthesis.</text>
</comment>
<comment type="subcellular location">
    <subcellularLocation>
        <location evidence="1">Cell inner membrane</location>
        <topology evidence="1">Multi-pass membrane protein</topology>
    </subcellularLocation>
</comment>
<comment type="similarity">
    <text evidence="1">Belongs to the UbiA prenyltransferase family.</text>
</comment>
<proteinExistence type="inferred from homology"/>
<sequence>MNMSKAEAFWQLTRMNRPIGSLLLLWPTLWALFLAADGLPDWHVLIVFVLGVVFMRSAGCVINDFADRKVDGHVKRTANRPLPSGLISSKEALSFFAVLVVCSFLLVLTMNTLTIMLSSIGIVLAIAYPFMKRVTYLPQFVLGLAFSWAIPMAYAAESNQVPSEAWLLFVINALWTIAYDTQYAMVDRDDDVKIGIKSTAILFGRYDKTIIGLLQLSVLALLIVLGSQLALSGIYYWGILAAAGFFVYQQWLIKGREREACFKAFLNNNYVGGLIFIAISASVLYQS</sequence>
<evidence type="ECO:0000255" key="1">
    <source>
        <dbReference type="HAMAP-Rule" id="MF_01635"/>
    </source>
</evidence>
<reference key="1">
    <citation type="submission" date="2008-08" db="EMBL/GenBank/DDBJ databases">
        <title>Complete sequence of Vibrio fischeri strain MJ11.</title>
        <authorList>
            <person name="Mandel M.J."/>
            <person name="Stabb E.V."/>
            <person name="Ruby E.G."/>
            <person name="Ferriera S."/>
            <person name="Johnson J."/>
            <person name="Kravitz S."/>
            <person name="Beeson K."/>
            <person name="Sutton G."/>
            <person name="Rogers Y.-H."/>
            <person name="Friedman R."/>
            <person name="Frazier M."/>
            <person name="Venter J.C."/>
        </authorList>
    </citation>
    <scope>NUCLEOTIDE SEQUENCE [LARGE SCALE GENOMIC DNA]</scope>
    <source>
        <strain>MJ11</strain>
    </source>
</reference>
<accession>B5FCB4</accession>
<feature type="chain" id="PRO_1000186695" description="4-hydroxybenzoate octaprenyltransferase">
    <location>
        <begin position="1"/>
        <end position="287"/>
    </location>
</feature>
<feature type="transmembrane region" description="Helical" evidence="1">
    <location>
        <begin position="19"/>
        <end position="39"/>
    </location>
</feature>
<feature type="transmembrane region" description="Helical" evidence="1">
    <location>
        <begin position="42"/>
        <end position="62"/>
    </location>
</feature>
<feature type="transmembrane region" description="Helical" evidence="1">
    <location>
        <begin position="95"/>
        <end position="115"/>
    </location>
</feature>
<feature type="transmembrane region" description="Helical" evidence="1">
    <location>
        <begin position="136"/>
        <end position="156"/>
    </location>
</feature>
<feature type="transmembrane region" description="Helical" evidence="1">
    <location>
        <begin position="166"/>
        <end position="186"/>
    </location>
</feature>
<feature type="transmembrane region" description="Helical" evidence="1">
    <location>
        <begin position="210"/>
        <end position="230"/>
    </location>
</feature>
<feature type="transmembrane region" description="Helical" evidence="1">
    <location>
        <begin position="233"/>
        <end position="253"/>
    </location>
</feature>
<feature type="transmembrane region" description="Helical" evidence="1">
    <location>
        <begin position="264"/>
        <end position="284"/>
    </location>
</feature>
<organism>
    <name type="scientific">Aliivibrio fischeri (strain MJ11)</name>
    <name type="common">Vibrio fischeri</name>
    <dbReference type="NCBI Taxonomy" id="388396"/>
    <lineage>
        <taxon>Bacteria</taxon>
        <taxon>Pseudomonadati</taxon>
        <taxon>Pseudomonadota</taxon>
        <taxon>Gammaproteobacteria</taxon>
        <taxon>Vibrionales</taxon>
        <taxon>Vibrionaceae</taxon>
        <taxon>Aliivibrio</taxon>
    </lineage>
</organism>
<name>UBIA_ALIFM</name>
<gene>
    <name evidence="1" type="primary">ubiA</name>
    <name type="ordered locus">VFMJ11_2568</name>
</gene>
<keyword id="KW-0997">Cell inner membrane</keyword>
<keyword id="KW-1003">Cell membrane</keyword>
<keyword id="KW-0460">Magnesium</keyword>
<keyword id="KW-0472">Membrane</keyword>
<keyword id="KW-0808">Transferase</keyword>
<keyword id="KW-0812">Transmembrane</keyword>
<keyword id="KW-1133">Transmembrane helix</keyword>
<keyword id="KW-0831">Ubiquinone biosynthesis</keyword>
<dbReference type="EC" id="2.5.1.39" evidence="1"/>
<dbReference type="EMBL" id="CP001139">
    <property type="protein sequence ID" value="ACH67381.1"/>
    <property type="molecule type" value="Genomic_DNA"/>
</dbReference>
<dbReference type="RefSeq" id="WP_012534388.1">
    <property type="nucleotide sequence ID" value="NC_011184.1"/>
</dbReference>
<dbReference type="SMR" id="B5FCB4"/>
<dbReference type="KEGG" id="vfm:VFMJ11_2568"/>
<dbReference type="HOGENOM" id="CLU_034879_1_0_6"/>
<dbReference type="UniPathway" id="UPA00232"/>
<dbReference type="Proteomes" id="UP000001857">
    <property type="component" value="Chromosome I"/>
</dbReference>
<dbReference type="GO" id="GO:0005886">
    <property type="term" value="C:plasma membrane"/>
    <property type="evidence" value="ECO:0007669"/>
    <property type="project" value="UniProtKB-SubCell"/>
</dbReference>
<dbReference type="GO" id="GO:0008412">
    <property type="term" value="F:4-hydroxybenzoate polyprenyltransferase activity"/>
    <property type="evidence" value="ECO:0007669"/>
    <property type="project" value="UniProtKB-UniRule"/>
</dbReference>
<dbReference type="GO" id="GO:0006744">
    <property type="term" value="P:ubiquinone biosynthetic process"/>
    <property type="evidence" value="ECO:0007669"/>
    <property type="project" value="UniProtKB-UniRule"/>
</dbReference>
<dbReference type="CDD" id="cd13959">
    <property type="entry name" value="PT_UbiA_COQ2"/>
    <property type="match status" value="1"/>
</dbReference>
<dbReference type="FunFam" id="1.10.357.140:FF:000002">
    <property type="entry name" value="4-hydroxybenzoate octaprenyltransferase"/>
    <property type="match status" value="1"/>
</dbReference>
<dbReference type="FunFam" id="1.20.120.1780:FF:000001">
    <property type="entry name" value="4-hydroxybenzoate octaprenyltransferase"/>
    <property type="match status" value="1"/>
</dbReference>
<dbReference type="Gene3D" id="1.10.357.140">
    <property type="entry name" value="UbiA prenyltransferase"/>
    <property type="match status" value="1"/>
</dbReference>
<dbReference type="Gene3D" id="1.20.120.1780">
    <property type="entry name" value="UbiA prenyltransferase"/>
    <property type="match status" value="1"/>
</dbReference>
<dbReference type="HAMAP" id="MF_01635">
    <property type="entry name" value="UbiA"/>
    <property type="match status" value="1"/>
</dbReference>
<dbReference type="InterPro" id="IPR006370">
    <property type="entry name" value="HB_polyprenyltransferase-like"/>
</dbReference>
<dbReference type="InterPro" id="IPR039653">
    <property type="entry name" value="Prenyltransferase"/>
</dbReference>
<dbReference type="InterPro" id="IPR000537">
    <property type="entry name" value="UbiA_prenyltransferase"/>
</dbReference>
<dbReference type="InterPro" id="IPR044878">
    <property type="entry name" value="UbiA_sf"/>
</dbReference>
<dbReference type="NCBIfam" id="TIGR01474">
    <property type="entry name" value="ubiA_proteo"/>
    <property type="match status" value="1"/>
</dbReference>
<dbReference type="PANTHER" id="PTHR11048:SF28">
    <property type="entry name" value="4-HYDROXYBENZOATE POLYPRENYLTRANSFERASE, MITOCHONDRIAL"/>
    <property type="match status" value="1"/>
</dbReference>
<dbReference type="PANTHER" id="PTHR11048">
    <property type="entry name" value="PRENYLTRANSFERASES"/>
    <property type="match status" value="1"/>
</dbReference>
<dbReference type="Pfam" id="PF01040">
    <property type="entry name" value="UbiA"/>
    <property type="match status" value="1"/>
</dbReference>
<protein>
    <recommendedName>
        <fullName evidence="1">4-hydroxybenzoate octaprenyltransferase</fullName>
        <ecNumber evidence="1">2.5.1.39</ecNumber>
    </recommendedName>
    <alternativeName>
        <fullName evidence="1">4-HB polyprenyltransferase</fullName>
    </alternativeName>
</protein>